<evidence type="ECO:0000250" key="1"/>
<evidence type="ECO:0000250" key="2">
    <source>
        <dbReference type="UniProtKB" id="P38881"/>
    </source>
</evidence>
<evidence type="ECO:0000255" key="3"/>
<evidence type="ECO:0000256" key="4">
    <source>
        <dbReference type="SAM" id="MobiDB-lite"/>
    </source>
</evidence>
<feature type="signal peptide" evidence="3">
    <location>
        <begin position="1"/>
        <end position="22"/>
    </location>
</feature>
<feature type="chain" id="PRO_0000320430" description="Nucleus-vacuole junction protein 1">
    <location>
        <begin position="23"/>
        <end position="321"/>
    </location>
</feature>
<feature type="transmembrane region" description="Helical" evidence="3">
    <location>
        <begin position="94"/>
        <end position="114"/>
    </location>
</feature>
<feature type="region of interest" description="TSC13-binding" evidence="1">
    <location>
        <begin position="73"/>
        <end position="125"/>
    </location>
</feature>
<feature type="region of interest" description="OSH1-binding" evidence="1">
    <location>
        <begin position="139"/>
        <end position="195"/>
    </location>
</feature>
<feature type="region of interest" description="Disordered" evidence="4">
    <location>
        <begin position="174"/>
        <end position="194"/>
    </location>
</feature>
<feature type="region of interest" description="Disordered" evidence="4">
    <location>
        <begin position="210"/>
        <end position="275"/>
    </location>
</feature>
<feature type="region of interest" description="VAC8-binding" evidence="1">
    <location>
        <begin position="233"/>
        <end position="321"/>
    </location>
</feature>
<feature type="region of interest" description="Disordered" evidence="4">
    <location>
        <begin position="299"/>
        <end position="321"/>
    </location>
</feature>
<feature type="compositionally biased region" description="Basic and acidic residues" evidence="4">
    <location>
        <begin position="174"/>
        <end position="183"/>
    </location>
</feature>
<feature type="compositionally biased region" description="Polar residues" evidence="4">
    <location>
        <begin position="184"/>
        <end position="194"/>
    </location>
</feature>
<feature type="compositionally biased region" description="Basic and acidic residues" evidence="4">
    <location>
        <begin position="242"/>
        <end position="262"/>
    </location>
</feature>
<feature type="compositionally biased region" description="Low complexity" evidence="4">
    <location>
        <begin position="263"/>
        <end position="272"/>
    </location>
</feature>
<feature type="modified residue" description="Phosphoserine" evidence="2">
    <location>
        <position position="156"/>
    </location>
</feature>
<feature type="modified residue" description="Phosphoserine" evidence="2">
    <location>
        <position position="199"/>
    </location>
</feature>
<feature type="modified residue" description="Phosphoserine" evidence="2">
    <location>
        <position position="285"/>
    </location>
</feature>
<feature type="modified residue" description="Phosphoserine" evidence="2">
    <location>
        <position position="298"/>
    </location>
</feature>
<name>NVJ1_YEAS7</name>
<dbReference type="EMBL" id="AAFW02000082">
    <property type="protein sequence ID" value="EDN62432.1"/>
    <property type="molecule type" value="Genomic_DNA"/>
</dbReference>
<dbReference type="SMR" id="A6ZTA1"/>
<dbReference type="HOGENOM" id="CLU_869201_0_0_1"/>
<dbReference type="Proteomes" id="UP000007060">
    <property type="component" value="Unassembled WGS sequence"/>
</dbReference>
<dbReference type="GO" id="GO:0005640">
    <property type="term" value="C:nuclear outer membrane"/>
    <property type="evidence" value="ECO:0007669"/>
    <property type="project" value="UniProtKB-SubCell"/>
</dbReference>
<dbReference type="GO" id="GO:0006914">
    <property type="term" value="P:autophagy"/>
    <property type="evidence" value="ECO:0007669"/>
    <property type="project" value="UniProtKB-KW"/>
</dbReference>
<gene>
    <name type="primary">NVJ1</name>
    <name type="synonym">VAB36</name>
    <name type="ORF">SCY_2585</name>
</gene>
<reference key="1">
    <citation type="journal article" date="2007" name="Proc. Natl. Acad. Sci. U.S.A.">
        <title>Genome sequencing and comparative analysis of Saccharomyces cerevisiae strain YJM789.</title>
        <authorList>
            <person name="Wei W."/>
            <person name="McCusker J.H."/>
            <person name="Hyman R.W."/>
            <person name="Jones T."/>
            <person name="Ning Y."/>
            <person name="Cao Z."/>
            <person name="Gu Z."/>
            <person name="Bruno D."/>
            <person name="Miranda M."/>
            <person name="Nguyen M."/>
            <person name="Wilhelmy J."/>
            <person name="Komp C."/>
            <person name="Tamse R."/>
            <person name="Wang X."/>
            <person name="Jia P."/>
            <person name="Luedi P."/>
            <person name="Oefner P.J."/>
            <person name="David L."/>
            <person name="Dietrich F.S."/>
            <person name="Li Y."/>
            <person name="Davis R.W."/>
            <person name="Steinmetz L.M."/>
        </authorList>
    </citation>
    <scope>NUCLEOTIDE SEQUENCE [LARGE SCALE GENOMIC DNA]</scope>
    <source>
        <strain>YJM789</strain>
    </source>
</reference>
<proteinExistence type="inferred from homology"/>
<keyword id="KW-0072">Autophagy</keyword>
<keyword id="KW-0472">Membrane</keyword>
<keyword id="KW-0539">Nucleus</keyword>
<keyword id="KW-0597">Phosphoprotein</keyword>
<keyword id="KW-0732">Signal</keyword>
<keyword id="KW-0812">Transmembrane</keyword>
<keyword id="KW-1133">Transmembrane helix</keyword>
<accession>A6ZTA1</accession>
<sequence>MTRPPLVRGIFSLGLSVAVLKGVEKTVRKHLERQGWIEPQKVDYELIFTIDRLKNLVDNKREALTAEQPDAGELSWRKVFNFISRQSSELDARIYVLILLLSFLLPIAWTVLDGDRETTLEDKDNDCNVDLIENERRLKHYNDGERAVLQFGKNRSEPIILSYKDMNVLEGEHEFTSKEEHSNSHLTSKSENALSQVGSEDLLGCHLEKQLEEDKNEPNGEADGEDDNNREKDCSSSSEVESQSKCRKESTAEPDSLSRDTRTTSSLKSSTSFPISFKGSIDLKSLNQPSSLLHIQVSPTKSSNLDAQVNTEQAYSQPFRY</sequence>
<organism>
    <name type="scientific">Saccharomyces cerevisiae (strain YJM789)</name>
    <name type="common">Baker's yeast</name>
    <dbReference type="NCBI Taxonomy" id="307796"/>
    <lineage>
        <taxon>Eukaryota</taxon>
        <taxon>Fungi</taxon>
        <taxon>Dikarya</taxon>
        <taxon>Ascomycota</taxon>
        <taxon>Saccharomycotina</taxon>
        <taxon>Saccharomycetes</taxon>
        <taxon>Saccharomycetales</taxon>
        <taxon>Saccharomycetaceae</taxon>
        <taxon>Saccharomyces</taxon>
    </lineage>
</organism>
<protein>
    <recommendedName>
        <fullName>Nucleus-vacuole junction protein 1</fullName>
    </recommendedName>
</protein>
<comment type="function">
    <text evidence="1">Involved in the formation of nucleus-vacuole (NV) junctions during piecemeal microautophagy of the nucleus (PMN). NV junctions are interorganelle interfaces mediated by NVJ1 in the nuclear envelope and VAC8 on the vacuole membrane. Together, NVJ1 and VAC8 form Velcro-like patches through which teardrop-like portions of the nucleus are pinched off into the vacuolar lumen and degraded by the PMN process. Also acts as an outer-nuclear membrane receptor for OSH1 and TSC13 (By similarity).</text>
</comment>
<comment type="subunit">
    <text evidence="1">Interacts with OSH1, TSC13 and VAC8.</text>
</comment>
<comment type="subcellular location">
    <subcellularLocation>
        <location evidence="1">Nucleus outer membrane</location>
        <topology evidence="1">Single-pass membrane protein</topology>
    </subcellularLocation>
</comment>